<feature type="chain" id="PRO_0000263132" description="Bifunctional protein GlmU">
    <location>
        <begin position="1"/>
        <end position="451"/>
    </location>
</feature>
<feature type="region of interest" description="Pyrophosphorylase" evidence="1">
    <location>
        <begin position="1"/>
        <end position="236"/>
    </location>
</feature>
<feature type="region of interest" description="Linker" evidence="1">
    <location>
        <begin position="237"/>
        <end position="257"/>
    </location>
</feature>
<feature type="region of interest" description="N-acetyltransferase" evidence="1">
    <location>
        <begin position="258"/>
        <end position="451"/>
    </location>
</feature>
<feature type="active site" description="Proton acceptor" evidence="1">
    <location>
        <position position="353"/>
    </location>
</feature>
<feature type="binding site" evidence="1">
    <location>
        <begin position="17"/>
        <end position="20"/>
    </location>
    <ligand>
        <name>UDP-N-acetyl-alpha-D-glucosamine</name>
        <dbReference type="ChEBI" id="CHEBI:57705"/>
    </ligand>
</feature>
<feature type="binding site" evidence="1">
    <location>
        <position position="31"/>
    </location>
    <ligand>
        <name>UDP-N-acetyl-alpha-D-glucosamine</name>
        <dbReference type="ChEBI" id="CHEBI:57705"/>
    </ligand>
</feature>
<feature type="binding site" evidence="1">
    <location>
        <position position="79"/>
    </location>
    <ligand>
        <name>UDP-N-acetyl-alpha-D-glucosamine</name>
        <dbReference type="ChEBI" id="CHEBI:57705"/>
    </ligand>
</feature>
<feature type="binding site" evidence="1">
    <location>
        <begin position="84"/>
        <end position="85"/>
    </location>
    <ligand>
        <name>UDP-N-acetyl-alpha-D-glucosamine</name>
        <dbReference type="ChEBI" id="CHEBI:57705"/>
    </ligand>
</feature>
<feature type="binding site" evidence="1">
    <location>
        <begin position="105"/>
        <end position="107"/>
    </location>
    <ligand>
        <name>UDP-N-acetyl-alpha-D-glucosamine</name>
        <dbReference type="ChEBI" id="CHEBI:57705"/>
    </ligand>
</feature>
<feature type="binding site" evidence="1">
    <location>
        <position position="107"/>
    </location>
    <ligand>
        <name>Mg(2+)</name>
        <dbReference type="ChEBI" id="CHEBI:18420"/>
    </ligand>
</feature>
<feature type="binding site" evidence="1">
    <location>
        <position position="144"/>
    </location>
    <ligand>
        <name>UDP-N-acetyl-alpha-D-glucosamine</name>
        <dbReference type="ChEBI" id="CHEBI:57705"/>
    </ligand>
</feature>
<feature type="binding site" evidence="1">
    <location>
        <position position="162"/>
    </location>
    <ligand>
        <name>UDP-N-acetyl-alpha-D-glucosamine</name>
        <dbReference type="ChEBI" id="CHEBI:57705"/>
    </ligand>
</feature>
<feature type="binding site" evidence="1">
    <location>
        <position position="177"/>
    </location>
    <ligand>
        <name>UDP-N-acetyl-alpha-D-glucosamine</name>
        <dbReference type="ChEBI" id="CHEBI:57705"/>
    </ligand>
</feature>
<feature type="binding site" evidence="1">
    <location>
        <position position="234"/>
    </location>
    <ligand>
        <name>Mg(2+)</name>
        <dbReference type="ChEBI" id="CHEBI:18420"/>
    </ligand>
</feature>
<feature type="binding site" evidence="1">
    <location>
        <position position="234"/>
    </location>
    <ligand>
        <name>UDP-N-acetyl-alpha-D-glucosamine</name>
        <dbReference type="ChEBI" id="CHEBI:57705"/>
    </ligand>
</feature>
<feature type="binding site" evidence="1">
    <location>
        <position position="323"/>
    </location>
    <ligand>
        <name>UDP-N-acetyl-alpha-D-glucosamine</name>
        <dbReference type="ChEBI" id="CHEBI:57705"/>
    </ligand>
</feature>
<feature type="binding site" evidence="1">
    <location>
        <position position="341"/>
    </location>
    <ligand>
        <name>UDP-N-acetyl-alpha-D-glucosamine</name>
        <dbReference type="ChEBI" id="CHEBI:57705"/>
    </ligand>
</feature>
<feature type="binding site" evidence="1">
    <location>
        <position position="356"/>
    </location>
    <ligand>
        <name>UDP-N-acetyl-alpha-D-glucosamine</name>
        <dbReference type="ChEBI" id="CHEBI:57705"/>
    </ligand>
</feature>
<feature type="binding site" evidence="1">
    <location>
        <position position="367"/>
    </location>
    <ligand>
        <name>UDP-N-acetyl-alpha-D-glucosamine</name>
        <dbReference type="ChEBI" id="CHEBI:57705"/>
    </ligand>
</feature>
<feature type="binding site" evidence="1">
    <location>
        <position position="370"/>
    </location>
    <ligand>
        <name>acetyl-CoA</name>
        <dbReference type="ChEBI" id="CHEBI:57288"/>
    </ligand>
</feature>
<feature type="binding site" evidence="1">
    <location>
        <begin position="376"/>
        <end position="377"/>
    </location>
    <ligand>
        <name>acetyl-CoA</name>
        <dbReference type="ChEBI" id="CHEBI:57288"/>
    </ligand>
</feature>
<feature type="binding site" evidence="1">
    <location>
        <position position="395"/>
    </location>
    <ligand>
        <name>acetyl-CoA</name>
        <dbReference type="ChEBI" id="CHEBI:57288"/>
    </ligand>
</feature>
<feature type="binding site" evidence="1">
    <location>
        <position position="413"/>
    </location>
    <ligand>
        <name>acetyl-CoA</name>
        <dbReference type="ChEBI" id="CHEBI:57288"/>
    </ligand>
</feature>
<feature type="binding site" evidence="1">
    <location>
        <position position="430"/>
    </location>
    <ligand>
        <name>acetyl-CoA</name>
        <dbReference type="ChEBI" id="CHEBI:57288"/>
    </ligand>
</feature>
<reference key="1">
    <citation type="journal article" date="2007" name="J. Bacteriol.">
        <title>Genome sequence analysis of the emerging human pathogenic acetic acid bacterium Granulibacter bethesdensis.</title>
        <authorList>
            <person name="Greenberg D.E."/>
            <person name="Porcella S.F."/>
            <person name="Zelazny A.M."/>
            <person name="Virtaneva K."/>
            <person name="Sturdevant D.E."/>
            <person name="Kupko J.J. III"/>
            <person name="Barbian K.D."/>
            <person name="Babar A."/>
            <person name="Dorward D.W."/>
            <person name="Holland S.M."/>
        </authorList>
    </citation>
    <scope>NUCLEOTIDE SEQUENCE [LARGE SCALE GENOMIC DNA]</scope>
    <source>
        <strain>ATCC BAA-1260 / CGDNIH1</strain>
    </source>
</reference>
<dbReference type="EC" id="2.7.7.23" evidence="1"/>
<dbReference type="EC" id="2.3.1.157" evidence="1"/>
<dbReference type="EMBL" id="CP000394">
    <property type="protein sequence ID" value="ABI62137.1"/>
    <property type="molecule type" value="Genomic_DNA"/>
</dbReference>
<dbReference type="RefSeq" id="WP_011631946.1">
    <property type="nucleotide sequence ID" value="NC_008343.2"/>
</dbReference>
<dbReference type="SMR" id="Q0BSR5"/>
<dbReference type="STRING" id="391165.GbCGDNIH1_1239"/>
<dbReference type="KEGG" id="gbe:GbCGDNIH1_1239"/>
<dbReference type="eggNOG" id="COG1207">
    <property type="taxonomic scope" value="Bacteria"/>
</dbReference>
<dbReference type="HOGENOM" id="CLU_029499_15_2_5"/>
<dbReference type="OrthoDB" id="9775031at2"/>
<dbReference type="UniPathway" id="UPA00113">
    <property type="reaction ID" value="UER00532"/>
</dbReference>
<dbReference type="UniPathway" id="UPA00113">
    <property type="reaction ID" value="UER00533"/>
</dbReference>
<dbReference type="UniPathway" id="UPA00973"/>
<dbReference type="Proteomes" id="UP000001963">
    <property type="component" value="Chromosome"/>
</dbReference>
<dbReference type="GO" id="GO:0005737">
    <property type="term" value="C:cytoplasm"/>
    <property type="evidence" value="ECO:0007669"/>
    <property type="project" value="UniProtKB-SubCell"/>
</dbReference>
<dbReference type="GO" id="GO:0016020">
    <property type="term" value="C:membrane"/>
    <property type="evidence" value="ECO:0007669"/>
    <property type="project" value="GOC"/>
</dbReference>
<dbReference type="GO" id="GO:0019134">
    <property type="term" value="F:glucosamine-1-phosphate N-acetyltransferase activity"/>
    <property type="evidence" value="ECO:0007669"/>
    <property type="project" value="UniProtKB-UniRule"/>
</dbReference>
<dbReference type="GO" id="GO:0000287">
    <property type="term" value="F:magnesium ion binding"/>
    <property type="evidence" value="ECO:0007669"/>
    <property type="project" value="UniProtKB-UniRule"/>
</dbReference>
<dbReference type="GO" id="GO:0003977">
    <property type="term" value="F:UDP-N-acetylglucosamine diphosphorylase activity"/>
    <property type="evidence" value="ECO:0007669"/>
    <property type="project" value="UniProtKB-UniRule"/>
</dbReference>
<dbReference type="GO" id="GO:0000902">
    <property type="term" value="P:cell morphogenesis"/>
    <property type="evidence" value="ECO:0007669"/>
    <property type="project" value="UniProtKB-UniRule"/>
</dbReference>
<dbReference type="GO" id="GO:0071555">
    <property type="term" value="P:cell wall organization"/>
    <property type="evidence" value="ECO:0007669"/>
    <property type="project" value="UniProtKB-KW"/>
</dbReference>
<dbReference type="GO" id="GO:0009245">
    <property type="term" value="P:lipid A biosynthetic process"/>
    <property type="evidence" value="ECO:0007669"/>
    <property type="project" value="UniProtKB-UniRule"/>
</dbReference>
<dbReference type="GO" id="GO:0009252">
    <property type="term" value="P:peptidoglycan biosynthetic process"/>
    <property type="evidence" value="ECO:0007669"/>
    <property type="project" value="UniProtKB-UniRule"/>
</dbReference>
<dbReference type="GO" id="GO:0008360">
    <property type="term" value="P:regulation of cell shape"/>
    <property type="evidence" value="ECO:0007669"/>
    <property type="project" value="UniProtKB-KW"/>
</dbReference>
<dbReference type="GO" id="GO:0006048">
    <property type="term" value="P:UDP-N-acetylglucosamine biosynthetic process"/>
    <property type="evidence" value="ECO:0007669"/>
    <property type="project" value="UniProtKB-UniPathway"/>
</dbReference>
<dbReference type="CDD" id="cd02540">
    <property type="entry name" value="GT2_GlmU_N_bac"/>
    <property type="match status" value="1"/>
</dbReference>
<dbReference type="CDD" id="cd03353">
    <property type="entry name" value="LbH_GlmU_C"/>
    <property type="match status" value="1"/>
</dbReference>
<dbReference type="Gene3D" id="2.160.10.10">
    <property type="entry name" value="Hexapeptide repeat proteins"/>
    <property type="match status" value="1"/>
</dbReference>
<dbReference type="Gene3D" id="3.90.550.10">
    <property type="entry name" value="Spore Coat Polysaccharide Biosynthesis Protein SpsA, Chain A"/>
    <property type="match status" value="1"/>
</dbReference>
<dbReference type="HAMAP" id="MF_01631">
    <property type="entry name" value="GlmU"/>
    <property type="match status" value="1"/>
</dbReference>
<dbReference type="InterPro" id="IPR005882">
    <property type="entry name" value="Bifunctional_GlmU"/>
</dbReference>
<dbReference type="InterPro" id="IPR050065">
    <property type="entry name" value="GlmU-like"/>
</dbReference>
<dbReference type="InterPro" id="IPR038009">
    <property type="entry name" value="GlmU_C_LbH"/>
</dbReference>
<dbReference type="InterPro" id="IPR001451">
    <property type="entry name" value="Hexapep"/>
</dbReference>
<dbReference type="InterPro" id="IPR025877">
    <property type="entry name" value="MobA-like_NTP_Trfase"/>
</dbReference>
<dbReference type="InterPro" id="IPR029044">
    <property type="entry name" value="Nucleotide-diphossugar_trans"/>
</dbReference>
<dbReference type="InterPro" id="IPR011004">
    <property type="entry name" value="Trimer_LpxA-like_sf"/>
</dbReference>
<dbReference type="NCBIfam" id="TIGR01173">
    <property type="entry name" value="glmU"/>
    <property type="match status" value="1"/>
</dbReference>
<dbReference type="NCBIfam" id="NF010933">
    <property type="entry name" value="PRK14353.1"/>
    <property type="match status" value="1"/>
</dbReference>
<dbReference type="PANTHER" id="PTHR43584:SF3">
    <property type="entry name" value="BIFUNCTIONAL PROTEIN GLMU"/>
    <property type="match status" value="1"/>
</dbReference>
<dbReference type="PANTHER" id="PTHR43584">
    <property type="entry name" value="NUCLEOTIDYL TRANSFERASE"/>
    <property type="match status" value="1"/>
</dbReference>
<dbReference type="Pfam" id="PF00132">
    <property type="entry name" value="Hexapep"/>
    <property type="match status" value="2"/>
</dbReference>
<dbReference type="Pfam" id="PF12804">
    <property type="entry name" value="NTP_transf_3"/>
    <property type="match status" value="1"/>
</dbReference>
<dbReference type="SUPFAM" id="SSF53448">
    <property type="entry name" value="Nucleotide-diphospho-sugar transferases"/>
    <property type="match status" value="1"/>
</dbReference>
<dbReference type="SUPFAM" id="SSF51161">
    <property type="entry name" value="Trimeric LpxA-like enzymes"/>
    <property type="match status" value="1"/>
</dbReference>
<name>GLMU_GRABC</name>
<proteinExistence type="inferred from homology"/>
<evidence type="ECO:0000255" key="1">
    <source>
        <dbReference type="HAMAP-Rule" id="MF_01631"/>
    </source>
</evidence>
<accession>Q0BSR5</accession>
<gene>
    <name evidence="1" type="primary">glmU</name>
    <name type="ordered locus">GbCGDNIH1_1239</name>
</gene>
<protein>
    <recommendedName>
        <fullName evidence="1">Bifunctional protein GlmU</fullName>
    </recommendedName>
    <domain>
        <recommendedName>
            <fullName evidence="1">UDP-N-acetylglucosamine pyrophosphorylase</fullName>
            <ecNumber evidence="1">2.7.7.23</ecNumber>
        </recommendedName>
        <alternativeName>
            <fullName evidence="1">N-acetylglucosamine-1-phosphate uridyltransferase</fullName>
        </alternativeName>
    </domain>
    <domain>
        <recommendedName>
            <fullName evidence="1">Glucosamine-1-phosphate N-acetyltransferase</fullName>
            <ecNumber evidence="1">2.3.1.157</ecNumber>
        </recommendedName>
    </domain>
</protein>
<comment type="function">
    <text evidence="1">Catalyzes the last two sequential reactions in the de novo biosynthetic pathway for UDP-N-acetylglucosamine (UDP-GlcNAc). The C-terminal domain catalyzes the transfer of acetyl group from acetyl coenzyme A to glucosamine-1-phosphate (GlcN-1-P) to produce N-acetylglucosamine-1-phosphate (GlcNAc-1-P), which is converted into UDP-GlcNAc by the transfer of uridine 5-monophosphate (from uridine 5-triphosphate), a reaction catalyzed by the N-terminal domain.</text>
</comment>
<comment type="catalytic activity">
    <reaction evidence="1">
        <text>alpha-D-glucosamine 1-phosphate + acetyl-CoA = N-acetyl-alpha-D-glucosamine 1-phosphate + CoA + H(+)</text>
        <dbReference type="Rhea" id="RHEA:13725"/>
        <dbReference type="ChEBI" id="CHEBI:15378"/>
        <dbReference type="ChEBI" id="CHEBI:57287"/>
        <dbReference type="ChEBI" id="CHEBI:57288"/>
        <dbReference type="ChEBI" id="CHEBI:57776"/>
        <dbReference type="ChEBI" id="CHEBI:58516"/>
        <dbReference type="EC" id="2.3.1.157"/>
    </reaction>
</comment>
<comment type="catalytic activity">
    <reaction evidence="1">
        <text>N-acetyl-alpha-D-glucosamine 1-phosphate + UTP + H(+) = UDP-N-acetyl-alpha-D-glucosamine + diphosphate</text>
        <dbReference type="Rhea" id="RHEA:13509"/>
        <dbReference type="ChEBI" id="CHEBI:15378"/>
        <dbReference type="ChEBI" id="CHEBI:33019"/>
        <dbReference type="ChEBI" id="CHEBI:46398"/>
        <dbReference type="ChEBI" id="CHEBI:57705"/>
        <dbReference type="ChEBI" id="CHEBI:57776"/>
        <dbReference type="EC" id="2.7.7.23"/>
    </reaction>
</comment>
<comment type="cofactor">
    <cofactor evidence="1">
        <name>Mg(2+)</name>
        <dbReference type="ChEBI" id="CHEBI:18420"/>
    </cofactor>
    <text evidence="1">Binds 1 Mg(2+) ion per subunit.</text>
</comment>
<comment type="pathway">
    <text evidence="1">Nucleotide-sugar biosynthesis; UDP-N-acetyl-alpha-D-glucosamine biosynthesis; N-acetyl-alpha-D-glucosamine 1-phosphate from alpha-D-glucosamine 6-phosphate (route II): step 2/2.</text>
</comment>
<comment type="pathway">
    <text evidence="1">Nucleotide-sugar biosynthesis; UDP-N-acetyl-alpha-D-glucosamine biosynthesis; UDP-N-acetyl-alpha-D-glucosamine from N-acetyl-alpha-D-glucosamine 1-phosphate: step 1/1.</text>
</comment>
<comment type="pathway">
    <text evidence="1">Bacterial outer membrane biogenesis; LPS lipid A biosynthesis.</text>
</comment>
<comment type="subunit">
    <text evidence="1">Homotrimer.</text>
</comment>
<comment type="subcellular location">
    <subcellularLocation>
        <location evidence="1">Cytoplasm</location>
    </subcellularLocation>
</comment>
<comment type="similarity">
    <text evidence="1">In the N-terminal section; belongs to the N-acetylglucosamine-1-phosphate uridyltransferase family.</text>
</comment>
<comment type="similarity">
    <text evidence="1">In the C-terminal section; belongs to the transferase hexapeptide repeat family.</text>
</comment>
<keyword id="KW-0012">Acyltransferase</keyword>
<keyword id="KW-0133">Cell shape</keyword>
<keyword id="KW-0961">Cell wall biogenesis/degradation</keyword>
<keyword id="KW-0963">Cytoplasm</keyword>
<keyword id="KW-0460">Magnesium</keyword>
<keyword id="KW-0479">Metal-binding</keyword>
<keyword id="KW-0511">Multifunctional enzyme</keyword>
<keyword id="KW-0548">Nucleotidyltransferase</keyword>
<keyword id="KW-0573">Peptidoglycan synthesis</keyword>
<keyword id="KW-1185">Reference proteome</keyword>
<keyword id="KW-0677">Repeat</keyword>
<keyword id="KW-0808">Transferase</keyword>
<sequence length="451" mass="47468">MDQTPSYSPPSGTAVILAAGLGTRMKSTRPKVLHPIAGRSMLRHLIAACQPVFSHIVVVIGPDMDSVAREAAPHPTVVQQERLGTAHAALQAMALVQQGEVAILYGDNPLISTATLHTLVQRRRQGDAVLAMLAMRPPEPGRYGRVITEKYQTGDYVSRIVEYAEANEQERAVTLCNAGVFCADAASMAAWLGGVENANSKGEYYLGDIIPLAIAGGGHVAAVEAPYEELRGINSKVELAEAEATVQIVLRRKALENGVTMTAPETVFLSADTLLAPDVLVGPHVVFGPGVTVEEGAEIRAFSHLEGCHVGRHTLIGPYARLRPGSVLGAGAHVGNFVELKQATLGEGAKANHLTYLGDVEVGARANIGAGTITCNYDGVHKHRTEIGDDAFIGSDTALVAPVRIGRGAITGAGSVIVDDVPADALALARGRQVNKPERAAEIRRQLKGSV</sequence>
<organism>
    <name type="scientific">Granulibacter bethesdensis (strain ATCC BAA-1260 / CGDNIH1)</name>
    <dbReference type="NCBI Taxonomy" id="391165"/>
    <lineage>
        <taxon>Bacteria</taxon>
        <taxon>Pseudomonadati</taxon>
        <taxon>Pseudomonadota</taxon>
        <taxon>Alphaproteobacteria</taxon>
        <taxon>Acetobacterales</taxon>
        <taxon>Acetobacteraceae</taxon>
        <taxon>Granulibacter</taxon>
    </lineage>
</organism>